<organism>
    <name type="scientific">Acinetobacter baumannii (strain AB0057)</name>
    <dbReference type="NCBI Taxonomy" id="480119"/>
    <lineage>
        <taxon>Bacteria</taxon>
        <taxon>Pseudomonadati</taxon>
        <taxon>Pseudomonadota</taxon>
        <taxon>Gammaproteobacteria</taxon>
        <taxon>Moraxellales</taxon>
        <taxon>Moraxellaceae</taxon>
        <taxon>Acinetobacter</taxon>
        <taxon>Acinetobacter calcoaceticus/baumannii complex</taxon>
    </lineage>
</organism>
<gene>
    <name evidence="1" type="primary">adk</name>
    <name type="ordered locus">AB57_1103</name>
</gene>
<proteinExistence type="inferred from homology"/>
<comment type="function">
    <text evidence="1">Catalyzes the reversible transfer of the terminal phosphate group between ATP and AMP. Plays an important role in cellular energy homeostasis and in adenine nucleotide metabolism.</text>
</comment>
<comment type="catalytic activity">
    <reaction evidence="1">
        <text>AMP + ATP = 2 ADP</text>
        <dbReference type="Rhea" id="RHEA:12973"/>
        <dbReference type="ChEBI" id="CHEBI:30616"/>
        <dbReference type="ChEBI" id="CHEBI:456215"/>
        <dbReference type="ChEBI" id="CHEBI:456216"/>
        <dbReference type="EC" id="2.7.4.3"/>
    </reaction>
</comment>
<comment type="pathway">
    <text evidence="1">Purine metabolism; AMP biosynthesis via salvage pathway; AMP from ADP: step 1/1.</text>
</comment>
<comment type="subunit">
    <text evidence="1">Monomer.</text>
</comment>
<comment type="subcellular location">
    <subcellularLocation>
        <location evidence="1">Cytoplasm</location>
    </subcellularLocation>
</comment>
<comment type="domain">
    <text evidence="1">Consists of three domains, a large central CORE domain and two small peripheral domains, NMPbind and LID, which undergo movements during catalysis. The LID domain closes over the site of phosphoryl transfer upon ATP binding. Assembling and dissambling the active center during each catalytic cycle provides an effective means to prevent ATP hydrolysis.</text>
</comment>
<comment type="similarity">
    <text evidence="1">Belongs to the adenylate kinase family.</text>
</comment>
<dbReference type="EC" id="2.7.4.3" evidence="1"/>
<dbReference type="EMBL" id="CP001182">
    <property type="protein sequence ID" value="ACJ40888.1"/>
    <property type="molecule type" value="Genomic_DNA"/>
</dbReference>
<dbReference type="RefSeq" id="WP_001220244.1">
    <property type="nucleotide sequence ID" value="NC_011586.2"/>
</dbReference>
<dbReference type="SMR" id="B7I8U4"/>
<dbReference type="GeneID" id="92892986"/>
<dbReference type="KEGG" id="abn:AB57_1103"/>
<dbReference type="HOGENOM" id="CLU_032354_1_2_6"/>
<dbReference type="UniPathway" id="UPA00588">
    <property type="reaction ID" value="UER00649"/>
</dbReference>
<dbReference type="Proteomes" id="UP000007094">
    <property type="component" value="Chromosome"/>
</dbReference>
<dbReference type="GO" id="GO:0005737">
    <property type="term" value="C:cytoplasm"/>
    <property type="evidence" value="ECO:0007669"/>
    <property type="project" value="UniProtKB-SubCell"/>
</dbReference>
<dbReference type="GO" id="GO:0004017">
    <property type="term" value="F:adenylate kinase activity"/>
    <property type="evidence" value="ECO:0007669"/>
    <property type="project" value="UniProtKB-UniRule"/>
</dbReference>
<dbReference type="GO" id="GO:0005524">
    <property type="term" value="F:ATP binding"/>
    <property type="evidence" value="ECO:0007669"/>
    <property type="project" value="UniProtKB-UniRule"/>
</dbReference>
<dbReference type="GO" id="GO:0044209">
    <property type="term" value="P:AMP salvage"/>
    <property type="evidence" value="ECO:0007669"/>
    <property type="project" value="UniProtKB-UniRule"/>
</dbReference>
<dbReference type="CDD" id="cd01428">
    <property type="entry name" value="ADK"/>
    <property type="match status" value="1"/>
</dbReference>
<dbReference type="FunFam" id="3.40.50.300:FF:000106">
    <property type="entry name" value="Adenylate kinase mitochondrial"/>
    <property type="match status" value="1"/>
</dbReference>
<dbReference type="Gene3D" id="3.40.50.300">
    <property type="entry name" value="P-loop containing nucleotide triphosphate hydrolases"/>
    <property type="match status" value="1"/>
</dbReference>
<dbReference type="HAMAP" id="MF_00235">
    <property type="entry name" value="Adenylate_kinase_Adk"/>
    <property type="match status" value="1"/>
</dbReference>
<dbReference type="InterPro" id="IPR006259">
    <property type="entry name" value="Adenyl_kin_sub"/>
</dbReference>
<dbReference type="InterPro" id="IPR000850">
    <property type="entry name" value="Adenylat/UMP-CMP_kin"/>
</dbReference>
<dbReference type="InterPro" id="IPR033690">
    <property type="entry name" value="Adenylat_kinase_CS"/>
</dbReference>
<dbReference type="InterPro" id="IPR007862">
    <property type="entry name" value="Adenylate_kinase_lid-dom"/>
</dbReference>
<dbReference type="InterPro" id="IPR027417">
    <property type="entry name" value="P-loop_NTPase"/>
</dbReference>
<dbReference type="NCBIfam" id="TIGR01351">
    <property type="entry name" value="adk"/>
    <property type="match status" value="1"/>
</dbReference>
<dbReference type="NCBIfam" id="NF001379">
    <property type="entry name" value="PRK00279.1-1"/>
    <property type="match status" value="1"/>
</dbReference>
<dbReference type="NCBIfam" id="NF001380">
    <property type="entry name" value="PRK00279.1-2"/>
    <property type="match status" value="1"/>
</dbReference>
<dbReference type="NCBIfam" id="NF001381">
    <property type="entry name" value="PRK00279.1-3"/>
    <property type="match status" value="1"/>
</dbReference>
<dbReference type="NCBIfam" id="NF011100">
    <property type="entry name" value="PRK14527.1"/>
    <property type="match status" value="1"/>
</dbReference>
<dbReference type="PANTHER" id="PTHR23359">
    <property type="entry name" value="NUCLEOTIDE KINASE"/>
    <property type="match status" value="1"/>
</dbReference>
<dbReference type="Pfam" id="PF00406">
    <property type="entry name" value="ADK"/>
    <property type="match status" value="1"/>
</dbReference>
<dbReference type="Pfam" id="PF05191">
    <property type="entry name" value="ADK_lid"/>
    <property type="match status" value="1"/>
</dbReference>
<dbReference type="PRINTS" id="PR00094">
    <property type="entry name" value="ADENYLTKNASE"/>
</dbReference>
<dbReference type="SUPFAM" id="SSF52540">
    <property type="entry name" value="P-loop containing nucleoside triphosphate hydrolases"/>
    <property type="match status" value="1"/>
</dbReference>
<dbReference type="PROSITE" id="PS00113">
    <property type="entry name" value="ADENYLATE_KINASE"/>
    <property type="match status" value="1"/>
</dbReference>
<evidence type="ECO:0000255" key="1">
    <source>
        <dbReference type="HAMAP-Rule" id="MF_00235"/>
    </source>
</evidence>
<feature type="chain" id="PRO_1000118981" description="Adenylate kinase">
    <location>
        <begin position="1"/>
        <end position="217"/>
    </location>
</feature>
<feature type="region of interest" description="NMP" evidence="1">
    <location>
        <begin position="30"/>
        <end position="59"/>
    </location>
</feature>
<feature type="region of interest" description="LID" evidence="1">
    <location>
        <begin position="122"/>
        <end position="159"/>
    </location>
</feature>
<feature type="binding site" evidence="1">
    <location>
        <begin position="10"/>
        <end position="15"/>
    </location>
    <ligand>
        <name>ATP</name>
        <dbReference type="ChEBI" id="CHEBI:30616"/>
    </ligand>
</feature>
<feature type="binding site" evidence="1">
    <location>
        <position position="31"/>
    </location>
    <ligand>
        <name>AMP</name>
        <dbReference type="ChEBI" id="CHEBI:456215"/>
    </ligand>
</feature>
<feature type="binding site" evidence="1">
    <location>
        <position position="36"/>
    </location>
    <ligand>
        <name>AMP</name>
        <dbReference type="ChEBI" id="CHEBI:456215"/>
    </ligand>
</feature>
<feature type="binding site" evidence="1">
    <location>
        <begin position="57"/>
        <end position="59"/>
    </location>
    <ligand>
        <name>AMP</name>
        <dbReference type="ChEBI" id="CHEBI:456215"/>
    </ligand>
</feature>
<feature type="binding site" evidence="1">
    <location>
        <begin position="85"/>
        <end position="88"/>
    </location>
    <ligand>
        <name>AMP</name>
        <dbReference type="ChEBI" id="CHEBI:456215"/>
    </ligand>
</feature>
<feature type="binding site" evidence="1">
    <location>
        <position position="92"/>
    </location>
    <ligand>
        <name>AMP</name>
        <dbReference type="ChEBI" id="CHEBI:456215"/>
    </ligand>
</feature>
<feature type="binding site" evidence="1">
    <location>
        <position position="123"/>
    </location>
    <ligand>
        <name>ATP</name>
        <dbReference type="ChEBI" id="CHEBI:30616"/>
    </ligand>
</feature>
<feature type="binding site" evidence="1">
    <location>
        <begin position="132"/>
        <end position="133"/>
    </location>
    <ligand>
        <name>ATP</name>
        <dbReference type="ChEBI" id="CHEBI:30616"/>
    </ligand>
</feature>
<feature type="binding site" evidence="1">
    <location>
        <position position="156"/>
    </location>
    <ligand>
        <name>AMP</name>
        <dbReference type="ChEBI" id="CHEBI:456215"/>
    </ligand>
</feature>
<feature type="binding site" evidence="1">
    <location>
        <position position="167"/>
    </location>
    <ligand>
        <name>AMP</name>
        <dbReference type="ChEBI" id="CHEBI:456215"/>
    </ligand>
</feature>
<feature type="binding site" evidence="1">
    <location>
        <position position="202"/>
    </location>
    <ligand>
        <name>ATP</name>
        <dbReference type="ChEBI" id="CHEBI:30616"/>
    </ligand>
</feature>
<protein>
    <recommendedName>
        <fullName evidence="1">Adenylate kinase</fullName>
        <shortName evidence="1">AK</shortName>
        <ecNumber evidence="1">2.7.4.3</ecNumber>
    </recommendedName>
    <alternativeName>
        <fullName evidence="1">ATP-AMP transphosphorylase</fullName>
    </alternativeName>
    <alternativeName>
        <fullName evidence="1">ATP:AMP phosphotransferase</fullName>
    </alternativeName>
    <alternativeName>
        <fullName evidence="1">Adenylate monophosphate kinase</fullName>
    </alternativeName>
</protein>
<keyword id="KW-0067">ATP-binding</keyword>
<keyword id="KW-0963">Cytoplasm</keyword>
<keyword id="KW-0418">Kinase</keyword>
<keyword id="KW-0545">Nucleotide biosynthesis</keyword>
<keyword id="KW-0547">Nucleotide-binding</keyword>
<keyword id="KW-0808">Transferase</keyword>
<name>KAD_ACIB5</name>
<accession>B7I8U4</accession>
<reference key="1">
    <citation type="journal article" date="2008" name="J. Bacteriol.">
        <title>Comparative genome sequence analysis of multidrug-resistant Acinetobacter baumannii.</title>
        <authorList>
            <person name="Adams M.D."/>
            <person name="Goglin K."/>
            <person name="Molyneaux N."/>
            <person name="Hujer K.M."/>
            <person name="Lavender H."/>
            <person name="Jamison J.J."/>
            <person name="MacDonald I.J."/>
            <person name="Martin K.M."/>
            <person name="Russo T."/>
            <person name="Campagnari A.A."/>
            <person name="Hujer A.M."/>
            <person name="Bonomo R.A."/>
            <person name="Gill S.R."/>
        </authorList>
    </citation>
    <scope>NUCLEOTIDE SEQUENCE [LARGE SCALE GENOMIC DNA]</scope>
    <source>
        <strain>AB0057</strain>
    </source>
</reference>
<sequence>MRIILLGPPGAGKGTQAQLICKRYNIPQISTGDMLRAAIREGTELGLKAKSVMESGGLVSDELIIGLVKERIAQPDCVNGCIFDGFPRTIPQAEALEKEGISIDHVIEIDVPDEEIVKRLSGRRQHPASGRVYHVVYNPPKVEGKDDETGEDLVQRPDDQEETIRKRLASYHTETEQLVGFYQGRAASGENAPTYDKLDGLRTIEDVQKDLFNILDK</sequence>